<reference key="1">
    <citation type="submission" date="2007-03" db="EMBL/GenBank/DDBJ databases">
        <title>Complete sequence of chromosome 1 of Burkholderia vietnamiensis G4.</title>
        <authorList>
            <consortium name="US DOE Joint Genome Institute"/>
            <person name="Copeland A."/>
            <person name="Lucas S."/>
            <person name="Lapidus A."/>
            <person name="Barry K."/>
            <person name="Detter J.C."/>
            <person name="Glavina del Rio T."/>
            <person name="Hammon N."/>
            <person name="Israni S."/>
            <person name="Dalin E."/>
            <person name="Tice H."/>
            <person name="Pitluck S."/>
            <person name="Chain P."/>
            <person name="Malfatti S."/>
            <person name="Shin M."/>
            <person name="Vergez L."/>
            <person name="Schmutz J."/>
            <person name="Larimer F."/>
            <person name="Land M."/>
            <person name="Hauser L."/>
            <person name="Kyrpides N."/>
            <person name="Tiedje J."/>
            <person name="Richardson P."/>
        </authorList>
    </citation>
    <scope>NUCLEOTIDE SEQUENCE [LARGE SCALE GENOMIC DNA]</scope>
    <source>
        <strain>G4 / LMG 22486</strain>
    </source>
</reference>
<name>RL18_BURVG</name>
<organism>
    <name type="scientific">Burkholderia vietnamiensis (strain G4 / LMG 22486)</name>
    <name type="common">Burkholderia cepacia (strain R1808)</name>
    <dbReference type="NCBI Taxonomy" id="269482"/>
    <lineage>
        <taxon>Bacteria</taxon>
        <taxon>Pseudomonadati</taxon>
        <taxon>Pseudomonadota</taxon>
        <taxon>Betaproteobacteria</taxon>
        <taxon>Burkholderiales</taxon>
        <taxon>Burkholderiaceae</taxon>
        <taxon>Burkholderia</taxon>
        <taxon>Burkholderia cepacia complex</taxon>
    </lineage>
</organism>
<gene>
    <name evidence="1" type="primary">rplR</name>
    <name type="ordered locus">Bcep1808_0346</name>
</gene>
<sequence>MDKTQSRLRRARQTRIKIAELQVARLAVHRTNTHIYAQVFSPCGTKVLASASTLEAEVRAELADKSGKGGNVNAATLIGKRIAEKAKAAGIESVAFDRSGFRYHGRVKALAEAAREAGLKF</sequence>
<feature type="chain" id="PRO_1000053002" description="Large ribosomal subunit protein uL18">
    <location>
        <begin position="1"/>
        <end position="121"/>
    </location>
</feature>
<evidence type="ECO:0000255" key="1">
    <source>
        <dbReference type="HAMAP-Rule" id="MF_01337"/>
    </source>
</evidence>
<evidence type="ECO:0000305" key="2"/>
<proteinExistence type="inferred from homology"/>
<comment type="function">
    <text evidence="1">This is one of the proteins that bind and probably mediate the attachment of the 5S RNA into the large ribosomal subunit, where it forms part of the central protuberance.</text>
</comment>
<comment type="subunit">
    <text evidence="1">Part of the 50S ribosomal subunit; part of the 5S rRNA/L5/L18/L25 subcomplex. Contacts the 5S and 23S rRNAs.</text>
</comment>
<comment type="similarity">
    <text evidence="1">Belongs to the universal ribosomal protein uL18 family.</text>
</comment>
<dbReference type="EMBL" id="CP000614">
    <property type="protein sequence ID" value="ABO53359.1"/>
    <property type="molecule type" value="Genomic_DNA"/>
</dbReference>
<dbReference type="SMR" id="A4JAQ6"/>
<dbReference type="KEGG" id="bvi:Bcep1808_0346"/>
<dbReference type="eggNOG" id="COG0256">
    <property type="taxonomic scope" value="Bacteria"/>
</dbReference>
<dbReference type="HOGENOM" id="CLU_098841_0_1_4"/>
<dbReference type="Proteomes" id="UP000002287">
    <property type="component" value="Chromosome 1"/>
</dbReference>
<dbReference type="GO" id="GO:0022625">
    <property type="term" value="C:cytosolic large ribosomal subunit"/>
    <property type="evidence" value="ECO:0007669"/>
    <property type="project" value="TreeGrafter"/>
</dbReference>
<dbReference type="GO" id="GO:0008097">
    <property type="term" value="F:5S rRNA binding"/>
    <property type="evidence" value="ECO:0007669"/>
    <property type="project" value="TreeGrafter"/>
</dbReference>
<dbReference type="GO" id="GO:0003735">
    <property type="term" value="F:structural constituent of ribosome"/>
    <property type="evidence" value="ECO:0007669"/>
    <property type="project" value="InterPro"/>
</dbReference>
<dbReference type="GO" id="GO:0006412">
    <property type="term" value="P:translation"/>
    <property type="evidence" value="ECO:0007669"/>
    <property type="project" value="UniProtKB-UniRule"/>
</dbReference>
<dbReference type="CDD" id="cd00432">
    <property type="entry name" value="Ribosomal_L18_L5e"/>
    <property type="match status" value="1"/>
</dbReference>
<dbReference type="FunFam" id="3.30.420.100:FF:000001">
    <property type="entry name" value="50S ribosomal protein L18"/>
    <property type="match status" value="1"/>
</dbReference>
<dbReference type="Gene3D" id="3.30.420.100">
    <property type="match status" value="1"/>
</dbReference>
<dbReference type="HAMAP" id="MF_01337_B">
    <property type="entry name" value="Ribosomal_uL18_B"/>
    <property type="match status" value="1"/>
</dbReference>
<dbReference type="InterPro" id="IPR004389">
    <property type="entry name" value="Ribosomal_uL18_bac-type"/>
</dbReference>
<dbReference type="InterPro" id="IPR005484">
    <property type="entry name" value="Ribosomal_uL18_bac/euk"/>
</dbReference>
<dbReference type="NCBIfam" id="TIGR00060">
    <property type="entry name" value="L18_bact"/>
    <property type="match status" value="1"/>
</dbReference>
<dbReference type="PANTHER" id="PTHR12899">
    <property type="entry name" value="39S RIBOSOMAL PROTEIN L18, MITOCHONDRIAL"/>
    <property type="match status" value="1"/>
</dbReference>
<dbReference type="PANTHER" id="PTHR12899:SF3">
    <property type="entry name" value="LARGE RIBOSOMAL SUBUNIT PROTEIN UL18M"/>
    <property type="match status" value="1"/>
</dbReference>
<dbReference type="Pfam" id="PF00861">
    <property type="entry name" value="Ribosomal_L18p"/>
    <property type="match status" value="1"/>
</dbReference>
<dbReference type="SUPFAM" id="SSF53137">
    <property type="entry name" value="Translational machinery components"/>
    <property type="match status" value="1"/>
</dbReference>
<accession>A4JAQ6</accession>
<protein>
    <recommendedName>
        <fullName evidence="1">Large ribosomal subunit protein uL18</fullName>
    </recommendedName>
    <alternativeName>
        <fullName evidence="2">50S ribosomal protein L18</fullName>
    </alternativeName>
</protein>
<keyword id="KW-0687">Ribonucleoprotein</keyword>
<keyword id="KW-0689">Ribosomal protein</keyword>
<keyword id="KW-0694">RNA-binding</keyword>
<keyword id="KW-0699">rRNA-binding</keyword>